<name>RS4_YERP3</name>
<organism>
    <name type="scientific">Yersinia pseudotuberculosis serotype O:1b (strain IP 31758)</name>
    <dbReference type="NCBI Taxonomy" id="349747"/>
    <lineage>
        <taxon>Bacteria</taxon>
        <taxon>Pseudomonadati</taxon>
        <taxon>Pseudomonadota</taxon>
        <taxon>Gammaproteobacteria</taxon>
        <taxon>Enterobacterales</taxon>
        <taxon>Yersiniaceae</taxon>
        <taxon>Yersinia</taxon>
    </lineage>
</organism>
<evidence type="ECO:0000255" key="1">
    <source>
        <dbReference type="HAMAP-Rule" id="MF_01306"/>
    </source>
</evidence>
<evidence type="ECO:0000305" key="2"/>
<accession>A7FNL1</accession>
<keyword id="KW-0687">Ribonucleoprotein</keyword>
<keyword id="KW-0689">Ribosomal protein</keyword>
<keyword id="KW-0694">RNA-binding</keyword>
<keyword id="KW-0699">rRNA-binding</keyword>
<protein>
    <recommendedName>
        <fullName evidence="1">Small ribosomal subunit protein uS4</fullName>
    </recommendedName>
    <alternativeName>
        <fullName evidence="2">30S ribosomal protein S4</fullName>
    </alternativeName>
</protein>
<gene>
    <name evidence="1" type="primary">rpsD</name>
    <name type="ordered locus">YpsIP31758_3891</name>
</gene>
<feature type="chain" id="PRO_0000322353" description="Small ribosomal subunit protein uS4">
    <location>
        <begin position="1"/>
        <end position="206"/>
    </location>
</feature>
<feature type="domain" description="S4 RNA-binding" evidence="1">
    <location>
        <begin position="96"/>
        <end position="156"/>
    </location>
</feature>
<sequence>MARYLGPKLKLSRREGTDLFLKSGVRAIDTKCKIEQPPGQHGARKPRLSDYGVQLREKQKVRRIYGVLERQFRNYYKEAARLKGNTGANLLQLLEGRLDNVVYRMGFGATRAESRQLVSHKAIMVNGRVVNIASYQVSPNDVVSIREKAKKQSRVKAALELAEQREKPTWLEVDAVKMEGVFKRIPERTDLSADINEHLIVELYSK</sequence>
<proteinExistence type="inferred from homology"/>
<comment type="function">
    <text evidence="1">One of the primary rRNA binding proteins, it binds directly to 16S rRNA where it nucleates assembly of the body of the 30S subunit.</text>
</comment>
<comment type="function">
    <text evidence="1">With S5 and S12 plays an important role in translational accuracy.</text>
</comment>
<comment type="subunit">
    <text evidence="1">Part of the 30S ribosomal subunit. Contacts protein S5. The interaction surface between S4 and S5 is involved in control of translational fidelity.</text>
</comment>
<comment type="similarity">
    <text evidence="1">Belongs to the universal ribosomal protein uS4 family.</text>
</comment>
<reference key="1">
    <citation type="journal article" date="2007" name="PLoS Genet.">
        <title>The complete genome sequence of Yersinia pseudotuberculosis IP31758, the causative agent of Far East scarlet-like fever.</title>
        <authorList>
            <person name="Eppinger M."/>
            <person name="Rosovitz M.J."/>
            <person name="Fricke W.F."/>
            <person name="Rasko D.A."/>
            <person name="Kokorina G."/>
            <person name="Fayolle C."/>
            <person name="Lindler L.E."/>
            <person name="Carniel E."/>
            <person name="Ravel J."/>
        </authorList>
    </citation>
    <scope>NUCLEOTIDE SEQUENCE [LARGE SCALE GENOMIC DNA]</scope>
    <source>
        <strain>IP 31758</strain>
    </source>
</reference>
<dbReference type="EMBL" id="CP000720">
    <property type="protein sequence ID" value="ABS46466.1"/>
    <property type="molecule type" value="Genomic_DNA"/>
</dbReference>
<dbReference type="RefSeq" id="WP_002218949.1">
    <property type="nucleotide sequence ID" value="NC_009708.1"/>
</dbReference>
<dbReference type="SMR" id="A7FNL1"/>
<dbReference type="GeneID" id="97454255"/>
<dbReference type="KEGG" id="ypi:YpsIP31758_3891"/>
<dbReference type="HOGENOM" id="CLU_092403_0_2_6"/>
<dbReference type="Proteomes" id="UP000002412">
    <property type="component" value="Chromosome"/>
</dbReference>
<dbReference type="GO" id="GO:0015935">
    <property type="term" value="C:small ribosomal subunit"/>
    <property type="evidence" value="ECO:0007669"/>
    <property type="project" value="InterPro"/>
</dbReference>
<dbReference type="GO" id="GO:0019843">
    <property type="term" value="F:rRNA binding"/>
    <property type="evidence" value="ECO:0007669"/>
    <property type="project" value="UniProtKB-UniRule"/>
</dbReference>
<dbReference type="GO" id="GO:0003735">
    <property type="term" value="F:structural constituent of ribosome"/>
    <property type="evidence" value="ECO:0007669"/>
    <property type="project" value="InterPro"/>
</dbReference>
<dbReference type="GO" id="GO:0042274">
    <property type="term" value="P:ribosomal small subunit biogenesis"/>
    <property type="evidence" value="ECO:0007669"/>
    <property type="project" value="TreeGrafter"/>
</dbReference>
<dbReference type="GO" id="GO:0006412">
    <property type="term" value="P:translation"/>
    <property type="evidence" value="ECO:0007669"/>
    <property type="project" value="UniProtKB-UniRule"/>
</dbReference>
<dbReference type="CDD" id="cd00165">
    <property type="entry name" value="S4"/>
    <property type="match status" value="1"/>
</dbReference>
<dbReference type="FunFam" id="1.10.1050.10:FF:000001">
    <property type="entry name" value="30S ribosomal protein S4"/>
    <property type="match status" value="1"/>
</dbReference>
<dbReference type="FunFam" id="3.10.290.10:FF:000001">
    <property type="entry name" value="30S ribosomal protein S4"/>
    <property type="match status" value="1"/>
</dbReference>
<dbReference type="Gene3D" id="1.10.1050.10">
    <property type="entry name" value="Ribosomal Protein S4 Delta 41, Chain A, domain 1"/>
    <property type="match status" value="1"/>
</dbReference>
<dbReference type="Gene3D" id="3.10.290.10">
    <property type="entry name" value="RNA-binding S4 domain"/>
    <property type="match status" value="1"/>
</dbReference>
<dbReference type="HAMAP" id="MF_01306_B">
    <property type="entry name" value="Ribosomal_uS4_B"/>
    <property type="match status" value="1"/>
</dbReference>
<dbReference type="InterPro" id="IPR022801">
    <property type="entry name" value="Ribosomal_uS4"/>
</dbReference>
<dbReference type="InterPro" id="IPR005709">
    <property type="entry name" value="Ribosomal_uS4_bac-type"/>
</dbReference>
<dbReference type="InterPro" id="IPR018079">
    <property type="entry name" value="Ribosomal_uS4_CS"/>
</dbReference>
<dbReference type="InterPro" id="IPR001912">
    <property type="entry name" value="Ribosomal_uS4_N"/>
</dbReference>
<dbReference type="InterPro" id="IPR002942">
    <property type="entry name" value="S4_RNA-bd"/>
</dbReference>
<dbReference type="InterPro" id="IPR036986">
    <property type="entry name" value="S4_RNA-bd_sf"/>
</dbReference>
<dbReference type="NCBIfam" id="NF003717">
    <property type="entry name" value="PRK05327.1"/>
    <property type="match status" value="1"/>
</dbReference>
<dbReference type="NCBIfam" id="TIGR01017">
    <property type="entry name" value="rpsD_bact"/>
    <property type="match status" value="1"/>
</dbReference>
<dbReference type="PANTHER" id="PTHR11831">
    <property type="entry name" value="30S 40S RIBOSOMAL PROTEIN"/>
    <property type="match status" value="1"/>
</dbReference>
<dbReference type="PANTHER" id="PTHR11831:SF4">
    <property type="entry name" value="SMALL RIBOSOMAL SUBUNIT PROTEIN US4M"/>
    <property type="match status" value="1"/>
</dbReference>
<dbReference type="Pfam" id="PF00163">
    <property type="entry name" value="Ribosomal_S4"/>
    <property type="match status" value="1"/>
</dbReference>
<dbReference type="Pfam" id="PF01479">
    <property type="entry name" value="S4"/>
    <property type="match status" value="1"/>
</dbReference>
<dbReference type="SMART" id="SM01390">
    <property type="entry name" value="Ribosomal_S4"/>
    <property type="match status" value="1"/>
</dbReference>
<dbReference type="SMART" id="SM00363">
    <property type="entry name" value="S4"/>
    <property type="match status" value="1"/>
</dbReference>
<dbReference type="SUPFAM" id="SSF55174">
    <property type="entry name" value="Alpha-L RNA-binding motif"/>
    <property type="match status" value="1"/>
</dbReference>
<dbReference type="PROSITE" id="PS00632">
    <property type="entry name" value="RIBOSOMAL_S4"/>
    <property type="match status" value="1"/>
</dbReference>
<dbReference type="PROSITE" id="PS50889">
    <property type="entry name" value="S4"/>
    <property type="match status" value="1"/>
</dbReference>